<comment type="function">
    <text>Calmodulin mediates the control of a large number of enzymes, ion channels and other proteins by Ca(2+). Among the enzymes to be stimulated by the calmodulin-Ca(2+) complex are a number of protein kinases and phosphatases.</text>
</comment>
<comment type="PTM">
    <text>The N-terminus is blocked.</text>
</comment>
<comment type="miscellaneous">
    <text>This protein has four functional calcium-binding sites.</text>
</comment>
<comment type="similarity">
    <text evidence="3">Belongs to the calmodulin family.</text>
</comment>
<proteinExistence type="evidence at protein level"/>
<protein>
    <recommendedName>
        <fullName>Calmodulin</fullName>
        <shortName>CaM</shortName>
    </recommendedName>
</protein>
<keyword id="KW-0007">Acetylation</keyword>
<keyword id="KW-0106">Calcium</keyword>
<keyword id="KW-0903">Direct protein sequencing</keyword>
<keyword id="KW-0479">Metal-binding</keyword>
<keyword id="KW-0488">Methylation</keyword>
<keyword id="KW-1185">Reference proteome</keyword>
<keyword id="KW-0677">Repeat</keyword>
<organism>
    <name type="scientific">Spinacia oleracea</name>
    <name type="common">Spinach</name>
    <dbReference type="NCBI Taxonomy" id="3562"/>
    <lineage>
        <taxon>Eukaryota</taxon>
        <taxon>Viridiplantae</taxon>
        <taxon>Streptophyta</taxon>
        <taxon>Embryophyta</taxon>
        <taxon>Tracheophyta</taxon>
        <taxon>Spermatophyta</taxon>
        <taxon>Magnoliopsida</taxon>
        <taxon>eudicotyledons</taxon>
        <taxon>Gunneridae</taxon>
        <taxon>Pentapetalae</taxon>
        <taxon>Caryophyllales</taxon>
        <taxon>Chenopodiaceae</taxon>
        <taxon>Chenopodioideae</taxon>
        <taxon>Anserineae</taxon>
        <taxon>Spinacia</taxon>
    </lineage>
</organism>
<name>CALM_SPIOL</name>
<evidence type="ECO:0000255" key="1">
    <source>
        <dbReference type="PROSITE-ProRule" id="PRU00448"/>
    </source>
</evidence>
<evidence type="ECO:0000269" key="2">
    <source>
    </source>
</evidence>
<evidence type="ECO:0000305" key="3"/>
<feature type="initiator methionine" description="Removed" evidence="2">
    <location>
        <position position="1"/>
    </location>
</feature>
<feature type="chain" id="PRO_0000198307" description="Calmodulin">
    <location>
        <begin position="2"/>
        <end position="149"/>
    </location>
</feature>
<feature type="domain" description="EF-hand 1" evidence="1">
    <location>
        <begin position="8"/>
        <end position="43"/>
    </location>
</feature>
<feature type="domain" description="EF-hand 2" evidence="1">
    <location>
        <begin position="44"/>
        <end position="79"/>
    </location>
</feature>
<feature type="domain" description="EF-hand 3" evidence="1">
    <location>
        <begin position="81"/>
        <end position="116"/>
    </location>
</feature>
<feature type="domain" description="EF-hand 4" evidence="1">
    <location>
        <begin position="117"/>
        <end position="149"/>
    </location>
</feature>
<feature type="binding site" evidence="1">
    <location>
        <position position="21"/>
    </location>
    <ligand>
        <name>Ca(2+)</name>
        <dbReference type="ChEBI" id="CHEBI:29108"/>
        <label>1</label>
    </ligand>
</feature>
<feature type="binding site" evidence="1">
    <location>
        <position position="23"/>
    </location>
    <ligand>
        <name>Ca(2+)</name>
        <dbReference type="ChEBI" id="CHEBI:29108"/>
        <label>1</label>
    </ligand>
</feature>
<feature type="binding site" evidence="1">
    <location>
        <position position="25"/>
    </location>
    <ligand>
        <name>Ca(2+)</name>
        <dbReference type="ChEBI" id="CHEBI:29108"/>
        <label>1</label>
    </ligand>
</feature>
<feature type="binding site" evidence="1">
    <location>
        <position position="27"/>
    </location>
    <ligand>
        <name>Ca(2+)</name>
        <dbReference type="ChEBI" id="CHEBI:29108"/>
        <label>1</label>
    </ligand>
</feature>
<feature type="binding site" evidence="1">
    <location>
        <position position="32"/>
    </location>
    <ligand>
        <name>Ca(2+)</name>
        <dbReference type="ChEBI" id="CHEBI:29108"/>
        <label>1</label>
    </ligand>
</feature>
<feature type="binding site" evidence="1">
    <location>
        <position position="57"/>
    </location>
    <ligand>
        <name>Ca(2+)</name>
        <dbReference type="ChEBI" id="CHEBI:29108"/>
        <label>2</label>
    </ligand>
</feature>
<feature type="binding site" evidence="1">
    <location>
        <position position="59"/>
    </location>
    <ligand>
        <name>Ca(2+)</name>
        <dbReference type="ChEBI" id="CHEBI:29108"/>
        <label>2</label>
    </ligand>
</feature>
<feature type="binding site" evidence="1">
    <location>
        <position position="61"/>
    </location>
    <ligand>
        <name>Ca(2+)</name>
        <dbReference type="ChEBI" id="CHEBI:29108"/>
        <label>2</label>
    </ligand>
</feature>
<feature type="binding site" evidence="1">
    <location>
        <position position="63"/>
    </location>
    <ligand>
        <name>Ca(2+)</name>
        <dbReference type="ChEBI" id="CHEBI:29108"/>
        <label>2</label>
    </ligand>
</feature>
<feature type="binding site" evidence="1">
    <location>
        <position position="68"/>
    </location>
    <ligand>
        <name>Ca(2+)</name>
        <dbReference type="ChEBI" id="CHEBI:29108"/>
        <label>2</label>
    </ligand>
</feature>
<feature type="binding site" evidence="1">
    <location>
        <position position="94"/>
    </location>
    <ligand>
        <name>Ca(2+)</name>
        <dbReference type="ChEBI" id="CHEBI:29108"/>
        <label>3</label>
    </ligand>
</feature>
<feature type="binding site" evidence="1">
    <location>
        <position position="96"/>
    </location>
    <ligand>
        <name>Ca(2+)</name>
        <dbReference type="ChEBI" id="CHEBI:29108"/>
        <label>3</label>
    </ligand>
</feature>
<feature type="binding site" evidence="1">
    <location>
        <position position="98"/>
    </location>
    <ligand>
        <name>Ca(2+)</name>
        <dbReference type="ChEBI" id="CHEBI:29108"/>
        <label>3</label>
    </ligand>
</feature>
<feature type="binding site" evidence="1">
    <location>
        <position position="105"/>
    </location>
    <ligand>
        <name>Ca(2+)</name>
        <dbReference type="ChEBI" id="CHEBI:29108"/>
        <label>3</label>
    </ligand>
</feature>
<feature type="binding site" evidence="1">
    <location>
        <position position="130"/>
    </location>
    <ligand>
        <name>Ca(2+)</name>
        <dbReference type="ChEBI" id="CHEBI:29108"/>
        <label>4</label>
    </ligand>
</feature>
<feature type="binding site" evidence="1">
    <location>
        <position position="132"/>
    </location>
    <ligand>
        <name>Ca(2+)</name>
        <dbReference type="ChEBI" id="CHEBI:29108"/>
        <label>4</label>
    </ligand>
</feature>
<feature type="binding site" evidence="1">
    <location>
        <position position="134"/>
    </location>
    <ligand>
        <name>Ca(2+)</name>
        <dbReference type="ChEBI" id="CHEBI:29108"/>
        <label>4</label>
    </ligand>
</feature>
<feature type="binding site" evidence="1">
    <location>
        <position position="136"/>
    </location>
    <ligand>
        <name>Ca(2+)</name>
        <dbReference type="ChEBI" id="CHEBI:29108"/>
        <label>4</label>
    </ligand>
</feature>
<feature type="binding site" evidence="1">
    <location>
        <position position="141"/>
    </location>
    <ligand>
        <name>Ca(2+)</name>
        <dbReference type="ChEBI" id="CHEBI:29108"/>
        <label>4</label>
    </ligand>
</feature>
<feature type="modified residue" description="N-acetylalanine" evidence="2">
    <location>
        <position position="2"/>
    </location>
</feature>
<feature type="modified residue" description="N6,N6,N6-trimethyllysine" evidence="2">
    <location>
        <position position="116"/>
    </location>
</feature>
<feature type="unsure residue">
    <location>
        <begin position="3"/>
        <end position="4"/>
    </location>
</feature>
<dbReference type="PIR" id="A03024">
    <property type="entry name" value="MCSP"/>
</dbReference>
<dbReference type="ChEMBL" id="CHEMBL5945"/>
<dbReference type="iPTMnet" id="P04353"/>
<dbReference type="Proteomes" id="UP001155700">
    <property type="component" value="Unplaced"/>
</dbReference>
<dbReference type="GO" id="GO:0005737">
    <property type="term" value="C:cytoplasm"/>
    <property type="evidence" value="ECO:0000318"/>
    <property type="project" value="GO_Central"/>
</dbReference>
<dbReference type="GO" id="GO:0016460">
    <property type="term" value="C:myosin II complex"/>
    <property type="evidence" value="ECO:0007669"/>
    <property type="project" value="TreeGrafter"/>
</dbReference>
<dbReference type="GO" id="GO:0005509">
    <property type="term" value="F:calcium ion binding"/>
    <property type="evidence" value="ECO:0000318"/>
    <property type="project" value="GO_Central"/>
</dbReference>
<dbReference type="GO" id="GO:0030234">
    <property type="term" value="F:enzyme regulator activity"/>
    <property type="evidence" value="ECO:0000318"/>
    <property type="project" value="GO_Central"/>
</dbReference>
<dbReference type="CDD" id="cd00051">
    <property type="entry name" value="EFh"/>
    <property type="match status" value="2"/>
</dbReference>
<dbReference type="FunFam" id="1.10.238.10:FF:000034">
    <property type="entry name" value="Calmodulin"/>
    <property type="match status" value="1"/>
</dbReference>
<dbReference type="FunFam" id="1.10.238.10:FF:000042">
    <property type="entry name" value="Calmodulin"/>
    <property type="match status" value="1"/>
</dbReference>
<dbReference type="Gene3D" id="1.10.238.10">
    <property type="entry name" value="EF-hand"/>
    <property type="match status" value="3"/>
</dbReference>
<dbReference type="InterPro" id="IPR050230">
    <property type="entry name" value="CALM/Myosin/TropC-like"/>
</dbReference>
<dbReference type="InterPro" id="IPR011992">
    <property type="entry name" value="EF-hand-dom_pair"/>
</dbReference>
<dbReference type="InterPro" id="IPR018247">
    <property type="entry name" value="EF_Hand_1_Ca_BS"/>
</dbReference>
<dbReference type="InterPro" id="IPR002048">
    <property type="entry name" value="EF_hand_dom"/>
</dbReference>
<dbReference type="PANTHER" id="PTHR23048:SF53">
    <property type="entry name" value="CALMODULIN"/>
    <property type="match status" value="1"/>
</dbReference>
<dbReference type="PANTHER" id="PTHR23048">
    <property type="entry name" value="MYOSIN LIGHT CHAIN 1, 3"/>
    <property type="match status" value="1"/>
</dbReference>
<dbReference type="Pfam" id="PF13499">
    <property type="entry name" value="EF-hand_7"/>
    <property type="match status" value="2"/>
</dbReference>
<dbReference type="SMART" id="SM00054">
    <property type="entry name" value="EFh"/>
    <property type="match status" value="4"/>
</dbReference>
<dbReference type="SUPFAM" id="SSF47473">
    <property type="entry name" value="EF-hand"/>
    <property type="match status" value="1"/>
</dbReference>
<dbReference type="PROSITE" id="PS00018">
    <property type="entry name" value="EF_HAND_1"/>
    <property type="match status" value="4"/>
</dbReference>
<dbReference type="PROSITE" id="PS50222">
    <property type="entry name" value="EF_HAND_2"/>
    <property type="match status" value="4"/>
</dbReference>
<reference key="1">
    <citation type="journal article" date="1984" name="Plant Physiol.">
        <title>Structural characterization of a higher plant calmodulin: Spinacia oleracea.</title>
        <authorList>
            <person name="Lukas T.J."/>
            <person name="Iverson D.B."/>
            <person name="Schleicher M."/>
            <person name="Watterson D.M."/>
        </authorList>
    </citation>
    <scope>PROTEIN SEQUENCE OF 2-149</scope>
    <scope>ACETYLATION AT ALA-2</scope>
    <scope>METHYLATION AT LYS-116</scope>
</reference>
<accession>P04353</accession>
<sequence>MAZZLTDEQIAEFKEAFSLFDKDGDGCITTKELGTVMRSLGQNPTEAELQDMINEVDADGNGTIDFPEFLNLMARKMKDTDSEEELKEAFRVFDKDQNGFISAAELRHVMTNLGEKLTDEEVDEMIREADVDGDGQINYEEFVKVMMAK</sequence>